<proteinExistence type="inferred from homology"/>
<name>AIM41_EREGS</name>
<feature type="transit peptide" description="Mitochondrion" evidence="2">
    <location>
        <begin position="1"/>
        <end position="20"/>
    </location>
</feature>
<feature type="chain" id="PRO_0000399862" description="Altered inheritance of mitochondria protein 41, mitochondrial">
    <location>
        <begin position="21"/>
        <end position="183"/>
    </location>
</feature>
<accession>Q75C17</accession>
<evidence type="ECO:0000250" key="1"/>
<evidence type="ECO:0000255" key="2"/>
<evidence type="ECO:0000305" key="3"/>
<gene>
    <name type="primary">AIM41</name>
    <name type="ordered locus">ACR100C</name>
</gene>
<keyword id="KW-0496">Mitochondrion</keyword>
<keyword id="KW-1185">Reference proteome</keyword>
<keyword id="KW-0809">Transit peptide</keyword>
<sequence>MLMNSAARPMLLFRALARRSASSQAYTDALAHLKQDLKKAMLAKDDTKKTTIRSLLATIKNKEIDSRDKPLDHFALHDIYSKLVAQRRESIDGFLKNGRDDLVQKEQLEMQLIQAYMAALPVASAEELAARADAFLHELKSTHGALPLPKVFAQVSWPTVAQDWNASPAAVRSALAAAFKKSS</sequence>
<comment type="subcellular location">
    <subcellularLocation>
        <location evidence="1">Mitochondrion</location>
    </subcellularLocation>
</comment>
<comment type="similarity">
    <text evidence="3">Belongs to the AIM41 family.</text>
</comment>
<reference key="1">
    <citation type="journal article" date="2004" name="Science">
        <title>The Ashbya gossypii genome as a tool for mapping the ancient Saccharomyces cerevisiae genome.</title>
        <authorList>
            <person name="Dietrich F.S."/>
            <person name="Voegeli S."/>
            <person name="Brachat S."/>
            <person name="Lerch A."/>
            <person name="Gates K."/>
            <person name="Steiner S."/>
            <person name="Mohr C."/>
            <person name="Poehlmann R."/>
            <person name="Luedi P."/>
            <person name="Choi S."/>
            <person name="Wing R.A."/>
            <person name="Flavier A."/>
            <person name="Gaffney T.D."/>
            <person name="Philippsen P."/>
        </authorList>
    </citation>
    <scope>NUCLEOTIDE SEQUENCE [LARGE SCALE GENOMIC DNA]</scope>
    <source>
        <strain>ATCC 10895 / CBS 109.51 / FGSC 9923 / NRRL Y-1056</strain>
    </source>
</reference>
<reference key="2">
    <citation type="journal article" date="2013" name="G3 (Bethesda)">
        <title>Genomes of Ashbya fungi isolated from insects reveal four mating-type loci, numerous translocations, lack of transposons, and distinct gene duplications.</title>
        <authorList>
            <person name="Dietrich F.S."/>
            <person name="Voegeli S."/>
            <person name="Kuo S."/>
            <person name="Philippsen P."/>
        </authorList>
    </citation>
    <scope>GENOME REANNOTATION</scope>
    <source>
        <strain>ATCC 10895 / CBS 109.51 / FGSC 9923 / NRRL Y-1056</strain>
    </source>
</reference>
<protein>
    <recommendedName>
        <fullName>Altered inheritance of mitochondria protein 41, mitochondrial</fullName>
    </recommendedName>
</protein>
<organism>
    <name type="scientific">Eremothecium gossypii (strain ATCC 10895 / CBS 109.51 / FGSC 9923 / NRRL Y-1056)</name>
    <name type="common">Yeast</name>
    <name type="synonym">Ashbya gossypii</name>
    <dbReference type="NCBI Taxonomy" id="284811"/>
    <lineage>
        <taxon>Eukaryota</taxon>
        <taxon>Fungi</taxon>
        <taxon>Dikarya</taxon>
        <taxon>Ascomycota</taxon>
        <taxon>Saccharomycotina</taxon>
        <taxon>Saccharomycetes</taxon>
        <taxon>Saccharomycetales</taxon>
        <taxon>Saccharomycetaceae</taxon>
        <taxon>Eremothecium</taxon>
    </lineage>
</organism>
<dbReference type="EMBL" id="AE016816">
    <property type="protein sequence ID" value="AAS51326.1"/>
    <property type="molecule type" value="Genomic_DNA"/>
</dbReference>
<dbReference type="RefSeq" id="NP_983502.1">
    <property type="nucleotide sequence ID" value="NM_208855.1"/>
</dbReference>
<dbReference type="SMR" id="Q75C17"/>
<dbReference type="FunCoup" id="Q75C17">
    <property type="interactions" value="130"/>
</dbReference>
<dbReference type="STRING" id="284811.Q75C17"/>
<dbReference type="EnsemblFungi" id="AAS51326">
    <property type="protein sequence ID" value="AAS51326"/>
    <property type="gene ID" value="AGOS_ACR100C"/>
</dbReference>
<dbReference type="GeneID" id="4619632"/>
<dbReference type="KEGG" id="ago:AGOS_ACR100C"/>
<dbReference type="eggNOG" id="ENOG502RZX9">
    <property type="taxonomic scope" value="Eukaryota"/>
</dbReference>
<dbReference type="HOGENOM" id="CLU_123460_0_0_1"/>
<dbReference type="InParanoid" id="Q75C17"/>
<dbReference type="OMA" id="CIRTINS"/>
<dbReference type="OrthoDB" id="538640at2759"/>
<dbReference type="Proteomes" id="UP000000591">
    <property type="component" value="Chromosome III"/>
</dbReference>
<dbReference type="GO" id="GO:0005739">
    <property type="term" value="C:mitochondrion"/>
    <property type="evidence" value="ECO:0007669"/>
    <property type="project" value="UniProtKB-SubCell"/>
</dbReference>
<dbReference type="GO" id="GO:0016884">
    <property type="term" value="F:carbon-nitrogen ligase activity, with glutamine as amido-N-donor"/>
    <property type="evidence" value="ECO:0007669"/>
    <property type="project" value="InterPro"/>
</dbReference>
<dbReference type="Gene3D" id="1.10.1510.10">
    <property type="entry name" value="Uncharacterised protein YqeY/AIM41 PF09424, N-terminal domain"/>
    <property type="match status" value="1"/>
</dbReference>
<dbReference type="InterPro" id="IPR003789">
    <property type="entry name" value="Asn/Gln_tRNA_amidoTrase-B-like"/>
</dbReference>
<dbReference type="InterPro" id="IPR019004">
    <property type="entry name" value="YqeY/Aim41"/>
</dbReference>
<dbReference type="InterPro" id="IPR042184">
    <property type="entry name" value="YqeY/Aim41_N"/>
</dbReference>
<dbReference type="PANTHER" id="PTHR28055">
    <property type="entry name" value="ALTERED INHERITANCE OF MITOCHONDRIA PROTEIN 41, MITOCHONDRIAL"/>
    <property type="match status" value="1"/>
</dbReference>
<dbReference type="PANTHER" id="PTHR28055:SF1">
    <property type="entry name" value="ALTERED INHERITANCE OF MITOCHONDRIA PROTEIN 41, MITOCHONDRIAL"/>
    <property type="match status" value="1"/>
</dbReference>
<dbReference type="Pfam" id="PF09424">
    <property type="entry name" value="YqeY"/>
    <property type="match status" value="1"/>
</dbReference>
<dbReference type="SUPFAM" id="SSF89095">
    <property type="entry name" value="GatB/YqeY motif"/>
    <property type="match status" value="1"/>
</dbReference>